<comment type="subunit">
    <text evidence="1">Binds to laminin.</text>
</comment>
<comment type="subcellular location">
    <subcellularLocation>
        <location evidence="1">Secreted</location>
        <location evidence="1">Extracellular space</location>
        <location evidence="1">Extracellular matrix</location>
    </subcellularLocation>
</comment>
<comment type="tissue specificity">
    <text>Cornea and other tissues.</text>
</comment>
<comment type="PTM">
    <text evidence="3">Contains keratan sulfate.</text>
</comment>
<comment type="PTM">
    <text>Cys-37, Cys-41, Cys-43 and Cys-53 are involved in disulfide bonds.</text>
</comment>
<comment type="similarity">
    <text evidence="6">Belongs to the small leucine-rich proteoglycan (SLRP) family. SLRP class II subfamily.</text>
</comment>
<accession>P51885</accession>
<accession>Q3TP25</accession>
<accession>Q99JZ3</accession>
<accession>Q9CXK0</accession>
<reference key="1">
    <citation type="journal article" date="1995" name="Invest. Ophthalmol. Vis. Sci.">
        <title>Sequence, molecular properties, and chromosomal mapping of mouse lumican.</title>
        <authorList>
            <person name="Funderburgh J.L."/>
            <person name="Funderburgh M.L."/>
            <person name="Hevelone N.D."/>
            <person name="Stech M.E."/>
            <person name="Justice M.J."/>
            <person name="Liu C.-Y."/>
            <person name="Kao W.W.-Y."/>
            <person name="Conrad G.W."/>
        </authorList>
    </citation>
    <scope>NUCLEOTIDE SEQUENCE [MRNA]</scope>
    <source>
        <tissue>Cornea</tissue>
    </source>
</reference>
<reference key="2">
    <citation type="submission" date="1997-07" db="EMBL/GenBank/DDBJ databases">
        <authorList>
            <person name="Ying S."/>
            <person name="Shiraishi A."/>
            <person name="Kao C.W.-C."/>
            <person name="Converse R.L."/>
            <person name="Funderburgh J.L."/>
            <person name="Swiergiel J."/>
            <person name="Roth M.R."/>
            <person name="Kao W.W.-Y."/>
        </authorList>
    </citation>
    <scope>NUCLEOTIDE SEQUENCE</scope>
</reference>
<reference key="3">
    <citation type="journal article" date="2005" name="Science">
        <title>The transcriptional landscape of the mammalian genome.</title>
        <authorList>
            <person name="Carninci P."/>
            <person name="Kasukawa T."/>
            <person name="Katayama S."/>
            <person name="Gough J."/>
            <person name="Frith M.C."/>
            <person name="Maeda N."/>
            <person name="Oyama R."/>
            <person name="Ravasi T."/>
            <person name="Lenhard B."/>
            <person name="Wells C."/>
            <person name="Kodzius R."/>
            <person name="Shimokawa K."/>
            <person name="Bajic V.B."/>
            <person name="Brenner S.E."/>
            <person name="Batalov S."/>
            <person name="Forrest A.R."/>
            <person name="Zavolan M."/>
            <person name="Davis M.J."/>
            <person name="Wilming L.G."/>
            <person name="Aidinis V."/>
            <person name="Allen J.E."/>
            <person name="Ambesi-Impiombato A."/>
            <person name="Apweiler R."/>
            <person name="Aturaliya R.N."/>
            <person name="Bailey T.L."/>
            <person name="Bansal M."/>
            <person name="Baxter L."/>
            <person name="Beisel K.W."/>
            <person name="Bersano T."/>
            <person name="Bono H."/>
            <person name="Chalk A.M."/>
            <person name="Chiu K.P."/>
            <person name="Choudhary V."/>
            <person name="Christoffels A."/>
            <person name="Clutterbuck D.R."/>
            <person name="Crowe M.L."/>
            <person name="Dalla E."/>
            <person name="Dalrymple B.P."/>
            <person name="de Bono B."/>
            <person name="Della Gatta G."/>
            <person name="di Bernardo D."/>
            <person name="Down T."/>
            <person name="Engstrom P."/>
            <person name="Fagiolini M."/>
            <person name="Faulkner G."/>
            <person name="Fletcher C.F."/>
            <person name="Fukushima T."/>
            <person name="Furuno M."/>
            <person name="Futaki S."/>
            <person name="Gariboldi M."/>
            <person name="Georgii-Hemming P."/>
            <person name="Gingeras T.R."/>
            <person name="Gojobori T."/>
            <person name="Green R.E."/>
            <person name="Gustincich S."/>
            <person name="Harbers M."/>
            <person name="Hayashi Y."/>
            <person name="Hensch T.K."/>
            <person name="Hirokawa N."/>
            <person name="Hill D."/>
            <person name="Huminiecki L."/>
            <person name="Iacono M."/>
            <person name="Ikeo K."/>
            <person name="Iwama A."/>
            <person name="Ishikawa T."/>
            <person name="Jakt M."/>
            <person name="Kanapin A."/>
            <person name="Katoh M."/>
            <person name="Kawasawa Y."/>
            <person name="Kelso J."/>
            <person name="Kitamura H."/>
            <person name="Kitano H."/>
            <person name="Kollias G."/>
            <person name="Krishnan S.P."/>
            <person name="Kruger A."/>
            <person name="Kummerfeld S.K."/>
            <person name="Kurochkin I.V."/>
            <person name="Lareau L.F."/>
            <person name="Lazarevic D."/>
            <person name="Lipovich L."/>
            <person name="Liu J."/>
            <person name="Liuni S."/>
            <person name="McWilliam S."/>
            <person name="Madan Babu M."/>
            <person name="Madera M."/>
            <person name="Marchionni L."/>
            <person name="Matsuda H."/>
            <person name="Matsuzawa S."/>
            <person name="Miki H."/>
            <person name="Mignone F."/>
            <person name="Miyake S."/>
            <person name="Morris K."/>
            <person name="Mottagui-Tabar S."/>
            <person name="Mulder N."/>
            <person name="Nakano N."/>
            <person name="Nakauchi H."/>
            <person name="Ng P."/>
            <person name="Nilsson R."/>
            <person name="Nishiguchi S."/>
            <person name="Nishikawa S."/>
            <person name="Nori F."/>
            <person name="Ohara O."/>
            <person name="Okazaki Y."/>
            <person name="Orlando V."/>
            <person name="Pang K.C."/>
            <person name="Pavan W.J."/>
            <person name="Pavesi G."/>
            <person name="Pesole G."/>
            <person name="Petrovsky N."/>
            <person name="Piazza S."/>
            <person name="Reed J."/>
            <person name="Reid J.F."/>
            <person name="Ring B.Z."/>
            <person name="Ringwald M."/>
            <person name="Rost B."/>
            <person name="Ruan Y."/>
            <person name="Salzberg S.L."/>
            <person name="Sandelin A."/>
            <person name="Schneider C."/>
            <person name="Schoenbach C."/>
            <person name="Sekiguchi K."/>
            <person name="Semple C.A."/>
            <person name="Seno S."/>
            <person name="Sessa L."/>
            <person name="Sheng Y."/>
            <person name="Shibata Y."/>
            <person name="Shimada H."/>
            <person name="Shimada K."/>
            <person name="Silva D."/>
            <person name="Sinclair B."/>
            <person name="Sperling S."/>
            <person name="Stupka E."/>
            <person name="Sugiura K."/>
            <person name="Sultana R."/>
            <person name="Takenaka Y."/>
            <person name="Taki K."/>
            <person name="Tammoja K."/>
            <person name="Tan S.L."/>
            <person name="Tang S."/>
            <person name="Taylor M.S."/>
            <person name="Tegner J."/>
            <person name="Teichmann S.A."/>
            <person name="Ueda H.R."/>
            <person name="van Nimwegen E."/>
            <person name="Verardo R."/>
            <person name="Wei C.L."/>
            <person name="Yagi K."/>
            <person name="Yamanishi H."/>
            <person name="Zabarovsky E."/>
            <person name="Zhu S."/>
            <person name="Zimmer A."/>
            <person name="Hide W."/>
            <person name="Bult C."/>
            <person name="Grimmond S.M."/>
            <person name="Teasdale R.D."/>
            <person name="Liu E.T."/>
            <person name="Brusic V."/>
            <person name="Quackenbush J."/>
            <person name="Wahlestedt C."/>
            <person name="Mattick J.S."/>
            <person name="Hume D.A."/>
            <person name="Kai C."/>
            <person name="Sasaki D."/>
            <person name="Tomaru Y."/>
            <person name="Fukuda S."/>
            <person name="Kanamori-Katayama M."/>
            <person name="Suzuki M."/>
            <person name="Aoki J."/>
            <person name="Arakawa T."/>
            <person name="Iida J."/>
            <person name="Imamura K."/>
            <person name="Itoh M."/>
            <person name="Kato T."/>
            <person name="Kawaji H."/>
            <person name="Kawagashira N."/>
            <person name="Kawashima T."/>
            <person name="Kojima M."/>
            <person name="Kondo S."/>
            <person name="Konno H."/>
            <person name="Nakano K."/>
            <person name="Ninomiya N."/>
            <person name="Nishio T."/>
            <person name="Okada M."/>
            <person name="Plessy C."/>
            <person name="Shibata K."/>
            <person name="Shiraki T."/>
            <person name="Suzuki S."/>
            <person name="Tagami M."/>
            <person name="Waki K."/>
            <person name="Watahiki A."/>
            <person name="Okamura-Oho Y."/>
            <person name="Suzuki H."/>
            <person name="Kawai J."/>
            <person name="Hayashizaki Y."/>
        </authorList>
    </citation>
    <scope>NUCLEOTIDE SEQUENCE [LARGE SCALE MRNA]</scope>
    <source>
        <strain>C57BL/6J</strain>
        <tissue>Cerebellum</tissue>
        <tissue>Embryonic head</tissue>
        <tissue>Mammary gland</tissue>
    </source>
</reference>
<reference key="4">
    <citation type="journal article" date="2004" name="Genome Res.">
        <title>The status, quality, and expansion of the NIH full-length cDNA project: the Mammalian Gene Collection (MGC).</title>
        <authorList>
            <consortium name="The MGC Project Team"/>
        </authorList>
    </citation>
    <scope>NUCLEOTIDE SEQUENCE [LARGE SCALE MRNA]</scope>
    <source>
        <tissue>Mammary gland</tissue>
    </source>
</reference>
<reference key="5">
    <citation type="journal article" date="2007" name="Nat. Methods">
        <title>Determination of the sites of tyrosine O-sulfation in peptides and proteins.</title>
        <authorList>
            <person name="Yu Y."/>
            <person name="Hoffhines A.J."/>
            <person name="Moore K.L."/>
            <person name="Leary J.A."/>
        </authorList>
    </citation>
    <scope>PROTEIN SEQUENCE OF 29-52</scope>
    <scope>SULFATION AT TYR-20; TYR-21; TYR-23 AND TYR-30</scope>
    <scope>PYROGLUTAMATE FORMATION AT GLN-19</scope>
    <scope>DISULFIDE BONDS</scope>
    <scope>IDENTIFICATION BY MASS SPECTROMETRY</scope>
</reference>
<reference key="6">
    <citation type="journal article" date="2006" name="J. Proteome Res.">
        <title>Proteome-wide characterization of N-glycosylation events by diagonal chromatography.</title>
        <authorList>
            <person name="Ghesquiere B."/>
            <person name="Van Damme J."/>
            <person name="Martens L."/>
            <person name="Vandekerckhove J."/>
            <person name="Gevaert K."/>
        </authorList>
    </citation>
    <scope>GLYCOSYLATION [LARGE SCALE ANALYSIS] AT ASN-127</scope>
    <source>
        <strain>C57BL/6J</strain>
        <tissue>Plasma</tissue>
    </source>
</reference>
<reference key="7">
    <citation type="journal article" date="2007" name="J. Proteome Res.">
        <title>Enhanced analysis of the mouse plasma proteome using cysteine-containing tryptic glycopeptides.</title>
        <authorList>
            <person name="Bernhard O.K."/>
            <person name="Kapp E.A."/>
            <person name="Simpson R.J."/>
        </authorList>
    </citation>
    <scope>GLYCOSYLATION [LARGE SCALE ANALYSIS] AT ASN-127 AND ASN-160</scope>
    <source>
        <strain>C57BL/6J</strain>
        <tissue>Plasma</tissue>
    </source>
</reference>
<reference key="8">
    <citation type="journal article" date="2010" name="Cell">
        <title>A tissue-specific atlas of mouse protein phosphorylation and expression.</title>
        <authorList>
            <person name="Huttlin E.L."/>
            <person name="Jedrychowski M.P."/>
            <person name="Elias J.E."/>
            <person name="Goswami T."/>
            <person name="Rad R."/>
            <person name="Beausoleil S.A."/>
            <person name="Villen J."/>
            <person name="Haas W."/>
            <person name="Sowa M.E."/>
            <person name="Gygi S.P."/>
        </authorList>
    </citation>
    <scope>IDENTIFICATION BY MASS SPECTROMETRY [LARGE SCALE ANALYSIS]</scope>
    <source>
        <tissue>Brown adipose tissue</tissue>
        <tissue>Heart</tissue>
        <tissue>Kidney</tissue>
        <tissue>Lung</tissue>
        <tissue>Pancreas</tissue>
        <tissue>Spleen</tissue>
        <tissue>Testis</tissue>
    </source>
</reference>
<evidence type="ECO:0000250" key="1"/>
<evidence type="ECO:0000250" key="2">
    <source>
        <dbReference type="UniProtKB" id="P51886"/>
    </source>
</evidence>
<evidence type="ECO:0000250" key="3">
    <source>
        <dbReference type="UniProtKB" id="Q05443"/>
    </source>
</evidence>
<evidence type="ECO:0000255" key="4"/>
<evidence type="ECO:0000269" key="5">
    <source>
    </source>
</evidence>
<evidence type="ECO:0000305" key="6"/>
<organism>
    <name type="scientific">Mus musculus</name>
    <name type="common">Mouse</name>
    <dbReference type="NCBI Taxonomy" id="10090"/>
    <lineage>
        <taxon>Eukaryota</taxon>
        <taxon>Metazoa</taxon>
        <taxon>Chordata</taxon>
        <taxon>Craniata</taxon>
        <taxon>Vertebrata</taxon>
        <taxon>Euteleostomi</taxon>
        <taxon>Mammalia</taxon>
        <taxon>Eutheria</taxon>
        <taxon>Euarchontoglires</taxon>
        <taxon>Glires</taxon>
        <taxon>Rodentia</taxon>
        <taxon>Myomorpha</taxon>
        <taxon>Muroidea</taxon>
        <taxon>Muridae</taxon>
        <taxon>Murinae</taxon>
        <taxon>Mus</taxon>
        <taxon>Mus</taxon>
    </lineage>
</organism>
<protein>
    <recommendedName>
        <fullName>Lumican</fullName>
    </recommendedName>
    <alternativeName>
        <fullName>Keratan sulfate proteoglycan lumican</fullName>
        <shortName>KSPG lumican</shortName>
    </alternativeName>
</protein>
<keyword id="KW-0903">Direct protein sequencing</keyword>
<keyword id="KW-1015">Disulfide bond</keyword>
<keyword id="KW-0272">Extracellular matrix</keyword>
<keyword id="KW-0325">Glycoprotein</keyword>
<keyword id="KW-0433">Leucine-rich repeat</keyword>
<keyword id="KW-0597">Phosphoprotein</keyword>
<keyword id="KW-0654">Proteoglycan</keyword>
<keyword id="KW-0873">Pyrrolidone carboxylic acid</keyword>
<keyword id="KW-1185">Reference proteome</keyword>
<keyword id="KW-0677">Repeat</keyword>
<keyword id="KW-0964">Secreted</keyword>
<keyword id="KW-0732">Signal</keyword>
<keyword id="KW-0765">Sulfation</keyword>
<name>LUM_MOUSE</name>
<proteinExistence type="evidence at protein level"/>
<feature type="signal peptide">
    <location>
        <begin position="1"/>
        <end position="18"/>
    </location>
</feature>
<feature type="chain" id="PRO_0000032734" description="Lumican">
    <location>
        <begin position="19"/>
        <end position="338"/>
    </location>
</feature>
<feature type="domain" description="LRRNT">
    <location>
        <begin position="28"/>
        <end position="66"/>
    </location>
</feature>
<feature type="repeat" description="LRR 1">
    <location>
        <begin position="67"/>
        <end position="88"/>
    </location>
</feature>
<feature type="repeat" description="LRR 2">
    <location>
        <begin position="91"/>
        <end position="114"/>
    </location>
</feature>
<feature type="repeat" description="LRR 3">
    <location>
        <begin position="117"/>
        <end position="137"/>
    </location>
</feature>
<feature type="repeat" description="LRR 4">
    <location>
        <begin position="138"/>
        <end position="159"/>
    </location>
</feature>
<feature type="repeat" description="LRR 5">
    <location>
        <begin position="160"/>
        <end position="181"/>
    </location>
</feature>
<feature type="repeat" description="LRR 6">
    <location>
        <begin position="185"/>
        <end position="205"/>
    </location>
</feature>
<feature type="repeat" description="LRR 7">
    <location>
        <begin position="206"/>
        <end position="227"/>
    </location>
</feature>
<feature type="repeat" description="LRR 8">
    <location>
        <begin position="230"/>
        <end position="250"/>
    </location>
</feature>
<feature type="repeat" description="LRR 9">
    <location>
        <begin position="255"/>
        <end position="276"/>
    </location>
</feature>
<feature type="repeat" description="LRR 10">
    <location>
        <begin position="277"/>
        <end position="296"/>
    </location>
</feature>
<feature type="repeat" description="LRR 11">
    <location>
        <begin position="305"/>
        <end position="326"/>
    </location>
</feature>
<feature type="modified residue" description="Pyrrolidone carboxylic acid" evidence="5">
    <location>
        <position position="19"/>
    </location>
</feature>
<feature type="modified residue" description="Sulfotyrosine" evidence="5">
    <location>
        <position position="20"/>
    </location>
</feature>
<feature type="modified residue" description="Sulfotyrosine" evidence="5">
    <location>
        <position position="21"/>
    </location>
</feature>
<feature type="modified residue" description="Sulfotyrosine" evidence="5">
    <location>
        <position position="23"/>
    </location>
</feature>
<feature type="modified residue" description="Sulfotyrosine" evidence="5">
    <location>
        <position position="30"/>
    </location>
</feature>
<feature type="modified residue" description="Phosphoserine" evidence="2">
    <location>
        <position position="304"/>
    </location>
</feature>
<feature type="glycosylation site" description="N-linked (GlcNAc...) (keratan sulfate) asparagine" evidence="4">
    <location>
        <position position="88"/>
    </location>
</feature>
<feature type="glycosylation site" description="N-linked (GlcNAc...) (keratan sulfate) asparagine" evidence="4">
    <location>
        <position position="127"/>
    </location>
</feature>
<feature type="glycosylation site" description="N-linked (GlcNAc...) (keratan sulfate) asparagine" evidence="4">
    <location>
        <position position="160"/>
    </location>
</feature>
<feature type="glycosylation site" description="N-linked (GlcNAc...) (keratan sulfate) asparagine" evidence="4">
    <location>
        <position position="252"/>
    </location>
</feature>
<feature type="disulfide bond" evidence="1">
    <location>
        <begin position="295"/>
        <end position="328"/>
    </location>
</feature>
<feature type="sequence conflict" description="In Ref. 3; BAB29264." evidence="6" ref="3">
    <original>K</original>
    <variation>M</variation>
    <location>
        <position position="57"/>
    </location>
</feature>
<feature type="sequence conflict" description="In Ref. 1 and 2." evidence="6" ref="1 2">
    <original>G</original>
    <variation>E</variation>
    <location>
        <position position="109"/>
    </location>
</feature>
<feature type="sequence conflict" description="In Ref. 1 and 2." evidence="6" ref="1 2">
    <original>S</original>
    <variation>T</variation>
    <location>
        <position position="293"/>
    </location>
</feature>
<dbReference type="EMBL" id="S79461">
    <property type="protein sequence ID" value="AAB35361.1"/>
    <property type="molecule type" value="mRNA"/>
</dbReference>
<dbReference type="EMBL" id="AF013262">
    <property type="protein sequence ID" value="AAB87767.1"/>
    <property type="molecule type" value="Genomic_DNA"/>
</dbReference>
<dbReference type="EMBL" id="AK014312">
    <property type="protein sequence ID" value="BAB29264.1"/>
    <property type="molecule type" value="mRNA"/>
</dbReference>
<dbReference type="EMBL" id="AK075737">
    <property type="protein sequence ID" value="BAC35919.1"/>
    <property type="molecule type" value="mRNA"/>
</dbReference>
<dbReference type="EMBL" id="AK164774">
    <property type="protein sequence ID" value="BAE37912.1"/>
    <property type="molecule type" value="mRNA"/>
</dbReference>
<dbReference type="EMBL" id="BC005550">
    <property type="protein sequence ID" value="AAH05550.1"/>
    <property type="molecule type" value="mRNA"/>
</dbReference>
<dbReference type="CCDS" id="CCDS24142.1"/>
<dbReference type="RefSeq" id="NP_032550.2">
    <property type="nucleotide sequence ID" value="NM_008524.2"/>
</dbReference>
<dbReference type="SMR" id="P51885"/>
<dbReference type="BioGRID" id="201228">
    <property type="interactions" value="3"/>
</dbReference>
<dbReference type="FunCoup" id="P51885">
    <property type="interactions" value="93"/>
</dbReference>
<dbReference type="STRING" id="10090.ENSMUSP00000040877"/>
<dbReference type="GlyCosmos" id="P51885">
    <property type="glycosylation" value="4 sites, No reported glycans"/>
</dbReference>
<dbReference type="GlyGen" id="P51885">
    <property type="glycosylation" value="5 sites, 1 O-linked glycan (1 site)"/>
</dbReference>
<dbReference type="PhosphoSitePlus" id="P51885"/>
<dbReference type="SwissPalm" id="P51885"/>
<dbReference type="CPTAC" id="non-CPTAC-3358"/>
<dbReference type="jPOST" id="P51885"/>
<dbReference type="PaxDb" id="10090-ENSMUSP00000040877"/>
<dbReference type="PeptideAtlas" id="P51885"/>
<dbReference type="ProteomicsDB" id="290192"/>
<dbReference type="Pumba" id="P51885"/>
<dbReference type="Antibodypedia" id="867">
    <property type="antibodies" value="375 antibodies from 34 providers"/>
</dbReference>
<dbReference type="DNASU" id="17022"/>
<dbReference type="Ensembl" id="ENSMUST00000038160.6">
    <property type="protein sequence ID" value="ENSMUSP00000040877.5"/>
    <property type="gene ID" value="ENSMUSG00000036446.6"/>
</dbReference>
<dbReference type="GeneID" id="17022"/>
<dbReference type="KEGG" id="mmu:17022"/>
<dbReference type="UCSC" id="uc007gwz.2">
    <property type="organism name" value="mouse"/>
</dbReference>
<dbReference type="AGR" id="MGI:109347"/>
<dbReference type="CTD" id="4060"/>
<dbReference type="MGI" id="MGI:109347">
    <property type="gene designation" value="Lum"/>
</dbReference>
<dbReference type="VEuPathDB" id="HostDB:ENSMUSG00000036446"/>
<dbReference type="eggNOG" id="KOG0619">
    <property type="taxonomic scope" value="Eukaryota"/>
</dbReference>
<dbReference type="GeneTree" id="ENSGT00940000158177"/>
<dbReference type="HOGENOM" id="CLU_000288_186_4_1"/>
<dbReference type="InParanoid" id="P51885"/>
<dbReference type="OMA" id="DCPINFP"/>
<dbReference type="OrthoDB" id="6359842at2759"/>
<dbReference type="PhylomeDB" id="P51885"/>
<dbReference type="TreeFam" id="TF334562"/>
<dbReference type="Reactome" id="R-MMU-2022854">
    <property type="pathway name" value="Keratan sulfate biosynthesis"/>
</dbReference>
<dbReference type="Reactome" id="R-MMU-2022857">
    <property type="pathway name" value="Keratan sulfate degradation"/>
</dbReference>
<dbReference type="Reactome" id="R-MMU-216083">
    <property type="pathway name" value="Integrin cell surface interactions"/>
</dbReference>
<dbReference type="BioGRID-ORCS" id="17022">
    <property type="hits" value="2 hits in 76 CRISPR screens"/>
</dbReference>
<dbReference type="ChiTaRS" id="Lum">
    <property type="organism name" value="mouse"/>
</dbReference>
<dbReference type="PRO" id="PR:P51885"/>
<dbReference type="Proteomes" id="UP000000589">
    <property type="component" value="Chromosome 10"/>
</dbReference>
<dbReference type="RNAct" id="P51885">
    <property type="molecule type" value="protein"/>
</dbReference>
<dbReference type="Bgee" id="ENSMUSG00000036446">
    <property type="expression patterns" value="Expressed in vault of skull and 201 other cell types or tissues"/>
</dbReference>
<dbReference type="GO" id="GO:0062023">
    <property type="term" value="C:collagen-containing extracellular matrix"/>
    <property type="evidence" value="ECO:0007005"/>
    <property type="project" value="BHF-UCL"/>
</dbReference>
<dbReference type="GO" id="GO:0031012">
    <property type="term" value="C:extracellular matrix"/>
    <property type="evidence" value="ECO:0000314"/>
    <property type="project" value="MGI"/>
</dbReference>
<dbReference type="GO" id="GO:0005576">
    <property type="term" value="C:extracellular region"/>
    <property type="evidence" value="ECO:0007669"/>
    <property type="project" value="UniProtKB-KW"/>
</dbReference>
<dbReference type="GO" id="GO:0005583">
    <property type="term" value="C:fibrillar collagen trimer"/>
    <property type="evidence" value="ECO:0007669"/>
    <property type="project" value="Ensembl"/>
</dbReference>
<dbReference type="GO" id="GO:0005518">
    <property type="term" value="F:collagen binding"/>
    <property type="evidence" value="ECO:0007669"/>
    <property type="project" value="Ensembl"/>
</dbReference>
<dbReference type="GO" id="GO:0051216">
    <property type="term" value="P:cartilage development"/>
    <property type="evidence" value="ECO:0007669"/>
    <property type="project" value="Ensembl"/>
</dbReference>
<dbReference type="GO" id="GO:0045944">
    <property type="term" value="P:positive regulation of transcription by RNA polymerase II"/>
    <property type="evidence" value="ECO:0000314"/>
    <property type="project" value="MGI"/>
</dbReference>
<dbReference type="GO" id="GO:0032914">
    <property type="term" value="P:positive regulation of transforming growth factor beta1 production"/>
    <property type="evidence" value="ECO:0000315"/>
    <property type="project" value="CACAO"/>
</dbReference>
<dbReference type="GO" id="GO:0070848">
    <property type="term" value="P:response to growth factor"/>
    <property type="evidence" value="ECO:0007669"/>
    <property type="project" value="Ensembl"/>
</dbReference>
<dbReference type="FunFam" id="3.80.10.10:FF:000390">
    <property type="entry name" value="fibromodulin"/>
    <property type="match status" value="1"/>
</dbReference>
<dbReference type="FunFam" id="3.80.10.10:FF:001062">
    <property type="entry name" value="lumican"/>
    <property type="match status" value="1"/>
</dbReference>
<dbReference type="Gene3D" id="3.80.10.10">
    <property type="entry name" value="Ribonuclease Inhibitor"/>
    <property type="match status" value="2"/>
</dbReference>
<dbReference type="InterPro" id="IPR001611">
    <property type="entry name" value="Leu-rich_rpt"/>
</dbReference>
<dbReference type="InterPro" id="IPR003591">
    <property type="entry name" value="Leu-rich_rpt_typical-subtyp"/>
</dbReference>
<dbReference type="InterPro" id="IPR032675">
    <property type="entry name" value="LRR_dom_sf"/>
</dbReference>
<dbReference type="InterPro" id="IPR000372">
    <property type="entry name" value="LRRNT"/>
</dbReference>
<dbReference type="InterPro" id="IPR050333">
    <property type="entry name" value="SLRP"/>
</dbReference>
<dbReference type="PANTHER" id="PTHR45712">
    <property type="entry name" value="AGAP008170-PA"/>
    <property type="match status" value="1"/>
</dbReference>
<dbReference type="PANTHER" id="PTHR45712:SF6">
    <property type="entry name" value="LUMICAN"/>
    <property type="match status" value="1"/>
</dbReference>
<dbReference type="Pfam" id="PF00560">
    <property type="entry name" value="LRR_1"/>
    <property type="match status" value="1"/>
</dbReference>
<dbReference type="Pfam" id="PF13855">
    <property type="entry name" value="LRR_8"/>
    <property type="match status" value="3"/>
</dbReference>
<dbReference type="Pfam" id="PF01462">
    <property type="entry name" value="LRRNT"/>
    <property type="match status" value="1"/>
</dbReference>
<dbReference type="PRINTS" id="PR00019">
    <property type="entry name" value="LEURICHRPT"/>
</dbReference>
<dbReference type="SMART" id="SM00364">
    <property type="entry name" value="LRR_BAC"/>
    <property type="match status" value="5"/>
</dbReference>
<dbReference type="SMART" id="SM00365">
    <property type="entry name" value="LRR_SD22"/>
    <property type="match status" value="5"/>
</dbReference>
<dbReference type="SMART" id="SM00369">
    <property type="entry name" value="LRR_TYP"/>
    <property type="match status" value="9"/>
</dbReference>
<dbReference type="SMART" id="SM00013">
    <property type="entry name" value="LRRNT"/>
    <property type="match status" value="1"/>
</dbReference>
<dbReference type="SUPFAM" id="SSF52058">
    <property type="entry name" value="L domain-like"/>
    <property type="match status" value="1"/>
</dbReference>
<dbReference type="PROSITE" id="PS51450">
    <property type="entry name" value="LRR"/>
    <property type="match status" value="10"/>
</dbReference>
<sequence length="338" mass="38265">MNVCAFSLALALVGSVSGQYYDYDIPLFMYGQISPNCAPECNCPHSYPTAMYCDDLKLKSVPMVPPGIKYLYLRNNQIDHIDEKAFENVTDLQWLILDHNLLENSKIKGKVFSKLKQLKKLHINYNNLTESVGPLPKSLQDLQLTNNKISKLGSFDGLVNLTFIYLQHNQLKEDAVSASLKGLKSLEYLDLSFNQMSKLPAGLPTSLLTLYLDNNKISNIPDEYFKRFTGLQYLRLSHNELADSGVPGNSFNISSLLELDLSYNKLKSIPTVNENLENYYLEVNELEKFDVKSFCKILGPLSYSKIKHLRLDGNPLTQSSLPPDMYECLRVANEITVN</sequence>
<gene>
    <name type="primary">Lum</name>
    <name type="synonym">Lcn</name>
    <name type="synonym">Ldc</name>
</gene>